<organism>
    <name type="scientific">Idiomarina loihiensis (strain ATCC BAA-735 / DSM 15497 / L2-TR)</name>
    <dbReference type="NCBI Taxonomy" id="283942"/>
    <lineage>
        <taxon>Bacteria</taxon>
        <taxon>Pseudomonadati</taxon>
        <taxon>Pseudomonadota</taxon>
        <taxon>Gammaproteobacteria</taxon>
        <taxon>Alteromonadales</taxon>
        <taxon>Idiomarinaceae</taxon>
        <taxon>Idiomarina</taxon>
    </lineage>
</organism>
<protein>
    <recommendedName>
        <fullName evidence="1">Probable chorismate pyruvate-lyase</fullName>
        <shortName evidence="1">CL</shortName>
        <shortName evidence="1">CPL</shortName>
        <ecNumber evidence="1">4.1.3.40</ecNumber>
    </recommendedName>
</protein>
<proteinExistence type="inferred from homology"/>
<reference key="1">
    <citation type="journal article" date="2004" name="Proc. Natl. Acad. Sci. U.S.A.">
        <title>Genome sequence of the deep-sea gamma-proteobacterium Idiomarina loihiensis reveals amino acid fermentation as a source of carbon and energy.</title>
        <authorList>
            <person name="Hou S."/>
            <person name="Saw J.H."/>
            <person name="Lee K.S."/>
            <person name="Freitas T.A."/>
            <person name="Belisle C."/>
            <person name="Kawarabayasi Y."/>
            <person name="Donachie S.P."/>
            <person name="Pikina A."/>
            <person name="Galperin M.Y."/>
            <person name="Koonin E.V."/>
            <person name="Makarova K.S."/>
            <person name="Omelchenko M.V."/>
            <person name="Sorokin A."/>
            <person name="Wolf Y.I."/>
            <person name="Li Q.X."/>
            <person name="Keum Y.S."/>
            <person name="Campbell S."/>
            <person name="Denery J."/>
            <person name="Aizawa S."/>
            <person name="Shibata S."/>
            <person name="Malahoff A."/>
            <person name="Alam M."/>
        </authorList>
    </citation>
    <scope>NUCLEOTIDE SEQUENCE [LARGE SCALE GENOMIC DNA]</scope>
    <source>
        <strain>ATCC BAA-735 / DSM 15497 / L2-TR</strain>
    </source>
</reference>
<keyword id="KW-0963">Cytoplasm</keyword>
<keyword id="KW-0456">Lyase</keyword>
<keyword id="KW-0670">Pyruvate</keyword>
<keyword id="KW-1185">Reference proteome</keyword>
<keyword id="KW-0831">Ubiquinone biosynthesis</keyword>
<comment type="function">
    <text evidence="1">Removes the pyruvyl group from chorismate, with concomitant aromatization of the ring, to provide 4-hydroxybenzoate (4HB) for the ubiquinone pathway.</text>
</comment>
<comment type="catalytic activity">
    <reaction evidence="1">
        <text>chorismate = 4-hydroxybenzoate + pyruvate</text>
        <dbReference type="Rhea" id="RHEA:16505"/>
        <dbReference type="ChEBI" id="CHEBI:15361"/>
        <dbReference type="ChEBI" id="CHEBI:17879"/>
        <dbReference type="ChEBI" id="CHEBI:29748"/>
        <dbReference type="EC" id="4.1.3.40"/>
    </reaction>
</comment>
<comment type="pathway">
    <text evidence="1">Cofactor biosynthesis; ubiquinone biosynthesis.</text>
</comment>
<comment type="subcellular location">
    <subcellularLocation>
        <location evidence="1">Cytoplasm</location>
    </subcellularLocation>
</comment>
<comment type="similarity">
    <text evidence="1">Belongs to the UbiC family.</text>
</comment>
<feature type="chain" id="PRO_0000240548" description="Probable chorismate pyruvate-lyase">
    <location>
        <begin position="1"/>
        <end position="193"/>
    </location>
</feature>
<feature type="binding site" evidence="1">
    <location>
        <position position="81"/>
    </location>
    <ligand>
        <name>substrate</name>
    </ligand>
</feature>
<feature type="binding site" evidence="1">
    <location>
        <position position="119"/>
    </location>
    <ligand>
        <name>substrate</name>
    </ligand>
</feature>
<feature type="binding site" evidence="1">
    <location>
        <position position="177"/>
    </location>
    <ligand>
        <name>substrate</name>
    </ligand>
</feature>
<dbReference type="EC" id="4.1.3.40" evidence="1"/>
<dbReference type="EMBL" id="AE017340">
    <property type="protein sequence ID" value="AAV81108.1"/>
    <property type="molecule type" value="Genomic_DNA"/>
</dbReference>
<dbReference type="RefSeq" id="WP_011233527.1">
    <property type="nucleotide sequence ID" value="NC_006512.1"/>
</dbReference>
<dbReference type="SMR" id="Q5QUP2"/>
<dbReference type="STRING" id="283942.IL0265"/>
<dbReference type="GeneID" id="41335412"/>
<dbReference type="KEGG" id="ilo:IL0265"/>
<dbReference type="eggNOG" id="COG3161">
    <property type="taxonomic scope" value="Bacteria"/>
</dbReference>
<dbReference type="HOGENOM" id="CLU_096824_1_1_6"/>
<dbReference type="OrthoDB" id="9789493at2"/>
<dbReference type="UniPathway" id="UPA00232"/>
<dbReference type="Proteomes" id="UP000001171">
    <property type="component" value="Chromosome"/>
</dbReference>
<dbReference type="GO" id="GO:0005829">
    <property type="term" value="C:cytosol"/>
    <property type="evidence" value="ECO:0007669"/>
    <property type="project" value="TreeGrafter"/>
</dbReference>
<dbReference type="GO" id="GO:0008813">
    <property type="term" value="F:chorismate lyase activity"/>
    <property type="evidence" value="ECO:0007669"/>
    <property type="project" value="UniProtKB-UniRule"/>
</dbReference>
<dbReference type="GO" id="GO:0042866">
    <property type="term" value="P:pyruvate biosynthetic process"/>
    <property type="evidence" value="ECO:0007669"/>
    <property type="project" value="UniProtKB-UniRule"/>
</dbReference>
<dbReference type="GO" id="GO:0006744">
    <property type="term" value="P:ubiquinone biosynthetic process"/>
    <property type="evidence" value="ECO:0007669"/>
    <property type="project" value="UniProtKB-UniRule"/>
</dbReference>
<dbReference type="Gene3D" id="3.40.1410.10">
    <property type="entry name" value="Chorismate lyase-like"/>
    <property type="match status" value="1"/>
</dbReference>
<dbReference type="HAMAP" id="MF_01632">
    <property type="entry name" value="UbiC"/>
    <property type="match status" value="1"/>
</dbReference>
<dbReference type="InterPro" id="IPR007440">
    <property type="entry name" value="Chorismate--pyruvate_lyase"/>
</dbReference>
<dbReference type="InterPro" id="IPR028978">
    <property type="entry name" value="Chorismate_lyase_/UTRA_dom_sf"/>
</dbReference>
<dbReference type="PANTHER" id="PTHR38683">
    <property type="entry name" value="CHORISMATE PYRUVATE-LYASE"/>
    <property type="match status" value="1"/>
</dbReference>
<dbReference type="PANTHER" id="PTHR38683:SF1">
    <property type="entry name" value="CHORISMATE PYRUVATE-LYASE"/>
    <property type="match status" value="1"/>
</dbReference>
<dbReference type="Pfam" id="PF04345">
    <property type="entry name" value="Chor_lyase"/>
    <property type="match status" value="1"/>
</dbReference>
<dbReference type="SUPFAM" id="SSF64288">
    <property type="entry name" value="Chorismate lyase-like"/>
    <property type="match status" value="1"/>
</dbReference>
<name>UBIC_IDILO</name>
<accession>Q5QUP2</accession>
<evidence type="ECO:0000255" key="1">
    <source>
        <dbReference type="HAMAP-Rule" id="MF_01632"/>
    </source>
</evidence>
<gene>
    <name evidence="1" type="primary">ubiC</name>
    <name type="ordered locus">IL0265</name>
</gene>
<sequence length="193" mass="21869">MTTEFYATPAFPVSKALQWTPPEQLELTPTQADWLLYEGSLTERLKQIGQQFSVKLLGQQLLAPNTEEKQRLKGKDQAVIREVLLYCNEKPWVFARSLFSPSAENANTLNLQQLGNQSLGESLFARSDLYCGDIEVAKVALEHPVARLNQQWFGINQRLLSRRRIFSTGGEQLLVSEVFLQPSPLYSSPNNRS</sequence>